<sequence length="247" mass="27500">MSPNPTSEFKQIIEQQSEKILNPIERTKVTQDLSENVILTTVDDLYNWARLSSLWPMLYGTACCFIEFAALIGSRFDFDRFGLVPRSSPRQADLIITAGTITMKMAPALVRLYEEMPEPKYVIAMGACTITGGMFSSDSTTAVRGVDKLIPVDVYIPGCPPRPEAIIDAIIKLRKKVANESIQERGTVLQQTNRYYSTTHKMQATEPILTGKYLQSATRQAPPKELLEATGMPVPPALLTTKQKEEI</sequence>
<reference key="1">
    <citation type="journal article" date="2007" name="DNA Res.">
        <title>Complete genomic structure of the bloom-forming toxic cyanobacterium Microcystis aeruginosa NIES-843.</title>
        <authorList>
            <person name="Kaneko T."/>
            <person name="Nakajima N."/>
            <person name="Okamoto S."/>
            <person name="Suzuki I."/>
            <person name="Tanabe Y."/>
            <person name="Tamaoki M."/>
            <person name="Nakamura Y."/>
            <person name="Kasai F."/>
            <person name="Watanabe A."/>
            <person name="Kawashima K."/>
            <person name="Kishida Y."/>
            <person name="Ono A."/>
            <person name="Shimizu Y."/>
            <person name="Takahashi C."/>
            <person name="Minami C."/>
            <person name="Fujishiro T."/>
            <person name="Kohara M."/>
            <person name="Katoh M."/>
            <person name="Nakazaki N."/>
            <person name="Nakayama S."/>
            <person name="Yamada M."/>
            <person name="Tabata S."/>
            <person name="Watanabe M.M."/>
        </authorList>
    </citation>
    <scope>NUCLEOTIDE SEQUENCE [LARGE SCALE GENOMIC DNA]</scope>
    <source>
        <strain>NIES-843 / IAM M-247</strain>
    </source>
</reference>
<feature type="chain" id="PRO_0000358426" description="NAD(P)H-quinone oxidoreductase subunit K">
    <location>
        <begin position="1"/>
        <end position="247"/>
    </location>
</feature>
<feature type="binding site" evidence="1">
    <location>
        <position position="63"/>
    </location>
    <ligand>
        <name>[4Fe-4S] cluster</name>
        <dbReference type="ChEBI" id="CHEBI:49883"/>
    </ligand>
</feature>
<feature type="binding site" evidence="1">
    <location>
        <position position="64"/>
    </location>
    <ligand>
        <name>[4Fe-4S] cluster</name>
        <dbReference type="ChEBI" id="CHEBI:49883"/>
    </ligand>
</feature>
<feature type="binding site" evidence="1">
    <location>
        <position position="128"/>
    </location>
    <ligand>
        <name>[4Fe-4S] cluster</name>
        <dbReference type="ChEBI" id="CHEBI:49883"/>
    </ligand>
</feature>
<feature type="binding site" evidence="1">
    <location>
        <position position="159"/>
    </location>
    <ligand>
        <name>[4Fe-4S] cluster</name>
        <dbReference type="ChEBI" id="CHEBI:49883"/>
    </ligand>
</feature>
<comment type="function">
    <text evidence="1">NDH-1 shuttles electrons from an unknown electron donor, via FMN and iron-sulfur (Fe-S) centers, to quinones in the respiratory and/or the photosynthetic chain. The immediate electron acceptor for the enzyme in this species is believed to be plastoquinone. Couples the redox reaction to proton translocation, and thus conserves the redox energy in a proton gradient. Cyanobacterial NDH-1 also plays a role in inorganic carbon-concentration.</text>
</comment>
<comment type="catalytic activity">
    <reaction evidence="1">
        <text>a plastoquinone + NADH + (n+1) H(+)(in) = a plastoquinol + NAD(+) + n H(+)(out)</text>
        <dbReference type="Rhea" id="RHEA:42608"/>
        <dbReference type="Rhea" id="RHEA-COMP:9561"/>
        <dbReference type="Rhea" id="RHEA-COMP:9562"/>
        <dbReference type="ChEBI" id="CHEBI:15378"/>
        <dbReference type="ChEBI" id="CHEBI:17757"/>
        <dbReference type="ChEBI" id="CHEBI:57540"/>
        <dbReference type="ChEBI" id="CHEBI:57945"/>
        <dbReference type="ChEBI" id="CHEBI:62192"/>
    </reaction>
</comment>
<comment type="catalytic activity">
    <reaction evidence="1">
        <text>a plastoquinone + NADPH + (n+1) H(+)(in) = a plastoquinol + NADP(+) + n H(+)(out)</text>
        <dbReference type="Rhea" id="RHEA:42612"/>
        <dbReference type="Rhea" id="RHEA-COMP:9561"/>
        <dbReference type="Rhea" id="RHEA-COMP:9562"/>
        <dbReference type="ChEBI" id="CHEBI:15378"/>
        <dbReference type="ChEBI" id="CHEBI:17757"/>
        <dbReference type="ChEBI" id="CHEBI:57783"/>
        <dbReference type="ChEBI" id="CHEBI:58349"/>
        <dbReference type="ChEBI" id="CHEBI:62192"/>
    </reaction>
</comment>
<comment type="cofactor">
    <cofactor evidence="1">
        <name>[4Fe-4S] cluster</name>
        <dbReference type="ChEBI" id="CHEBI:49883"/>
    </cofactor>
    <text evidence="1">Binds 1 [4Fe-4S] cluster.</text>
</comment>
<comment type="subunit">
    <text evidence="1">NDH-1 can be composed of about 15 different subunits; different subcomplexes with different compositions have been identified which probably have different functions.</text>
</comment>
<comment type="subcellular location">
    <subcellularLocation>
        <location evidence="1">Cellular thylakoid membrane</location>
        <topology evidence="1">Peripheral membrane protein</topology>
        <orientation evidence="1">Cytoplasmic side</orientation>
    </subcellularLocation>
</comment>
<comment type="similarity">
    <text evidence="1">Belongs to the complex I 20 kDa subunit family.</text>
</comment>
<evidence type="ECO:0000255" key="1">
    <source>
        <dbReference type="HAMAP-Rule" id="MF_01356"/>
    </source>
</evidence>
<protein>
    <recommendedName>
        <fullName evidence="1">NAD(P)H-quinone oxidoreductase subunit K</fullName>
        <ecNumber evidence="1">7.1.1.-</ecNumber>
    </recommendedName>
    <alternativeName>
        <fullName evidence="1">NAD(P)H dehydrogenase I subunit K</fullName>
    </alternativeName>
    <alternativeName>
        <fullName evidence="1">NDH-1 subunit K</fullName>
        <shortName evidence="1">NDH-K</shortName>
    </alternativeName>
</protein>
<proteinExistence type="inferred from homology"/>
<gene>
    <name evidence="1" type="primary">ndhK</name>
    <name type="ordered locus">MAE_11770</name>
</gene>
<keyword id="KW-0004">4Fe-4S</keyword>
<keyword id="KW-0408">Iron</keyword>
<keyword id="KW-0411">Iron-sulfur</keyword>
<keyword id="KW-0472">Membrane</keyword>
<keyword id="KW-0479">Metal-binding</keyword>
<keyword id="KW-0520">NAD</keyword>
<keyword id="KW-0521">NADP</keyword>
<keyword id="KW-0618">Plastoquinone</keyword>
<keyword id="KW-0874">Quinone</keyword>
<keyword id="KW-0793">Thylakoid</keyword>
<keyword id="KW-1278">Translocase</keyword>
<keyword id="KW-0813">Transport</keyword>
<accession>B0JSV5</accession>
<dbReference type="EC" id="7.1.1.-" evidence="1"/>
<dbReference type="EMBL" id="AP009552">
    <property type="protein sequence ID" value="BAG00999.1"/>
    <property type="molecule type" value="Genomic_DNA"/>
</dbReference>
<dbReference type="RefSeq" id="WP_002760976.1">
    <property type="nucleotide sequence ID" value="NC_010296.1"/>
</dbReference>
<dbReference type="SMR" id="B0JSV5"/>
<dbReference type="STRING" id="449447.MAE_11770"/>
<dbReference type="PaxDb" id="449447-MAE_11770"/>
<dbReference type="EnsemblBacteria" id="BAG00999">
    <property type="protein sequence ID" value="BAG00999"/>
    <property type="gene ID" value="MAE_11770"/>
</dbReference>
<dbReference type="KEGG" id="mar:MAE_11770"/>
<dbReference type="eggNOG" id="COG0377">
    <property type="taxonomic scope" value="Bacteria"/>
</dbReference>
<dbReference type="HOGENOM" id="CLU_055737_2_1_3"/>
<dbReference type="BioCyc" id="MAER449447:MAE_RS05185-MONOMER"/>
<dbReference type="Proteomes" id="UP000001510">
    <property type="component" value="Chromosome"/>
</dbReference>
<dbReference type="GO" id="GO:0031676">
    <property type="term" value="C:plasma membrane-derived thylakoid membrane"/>
    <property type="evidence" value="ECO:0007669"/>
    <property type="project" value="UniProtKB-SubCell"/>
</dbReference>
<dbReference type="GO" id="GO:0045271">
    <property type="term" value="C:respiratory chain complex I"/>
    <property type="evidence" value="ECO:0007669"/>
    <property type="project" value="TreeGrafter"/>
</dbReference>
<dbReference type="GO" id="GO:0051539">
    <property type="term" value="F:4 iron, 4 sulfur cluster binding"/>
    <property type="evidence" value="ECO:0007669"/>
    <property type="project" value="UniProtKB-KW"/>
</dbReference>
<dbReference type="GO" id="GO:0005506">
    <property type="term" value="F:iron ion binding"/>
    <property type="evidence" value="ECO:0007669"/>
    <property type="project" value="UniProtKB-UniRule"/>
</dbReference>
<dbReference type="GO" id="GO:0008137">
    <property type="term" value="F:NADH dehydrogenase (ubiquinone) activity"/>
    <property type="evidence" value="ECO:0007669"/>
    <property type="project" value="InterPro"/>
</dbReference>
<dbReference type="GO" id="GO:0048038">
    <property type="term" value="F:quinone binding"/>
    <property type="evidence" value="ECO:0007669"/>
    <property type="project" value="UniProtKB-KW"/>
</dbReference>
<dbReference type="GO" id="GO:0009060">
    <property type="term" value="P:aerobic respiration"/>
    <property type="evidence" value="ECO:0007669"/>
    <property type="project" value="TreeGrafter"/>
</dbReference>
<dbReference type="GO" id="GO:0015990">
    <property type="term" value="P:electron transport coupled proton transport"/>
    <property type="evidence" value="ECO:0007669"/>
    <property type="project" value="TreeGrafter"/>
</dbReference>
<dbReference type="GO" id="GO:0019684">
    <property type="term" value="P:photosynthesis, light reaction"/>
    <property type="evidence" value="ECO:0007669"/>
    <property type="project" value="UniProtKB-UniRule"/>
</dbReference>
<dbReference type="FunFam" id="3.40.50.12280:FF:000003">
    <property type="entry name" value="NAD(P)H-quinone oxidoreductase subunit K, chloroplastic"/>
    <property type="match status" value="1"/>
</dbReference>
<dbReference type="Gene3D" id="3.40.50.12280">
    <property type="match status" value="1"/>
</dbReference>
<dbReference type="HAMAP" id="MF_01356">
    <property type="entry name" value="NDH1_NuoB"/>
    <property type="match status" value="1"/>
</dbReference>
<dbReference type="InterPro" id="IPR006137">
    <property type="entry name" value="NADH_UbQ_OxRdtase-like_20kDa"/>
</dbReference>
<dbReference type="InterPro" id="IPR006138">
    <property type="entry name" value="NADH_UQ_OxRdtase_20Kd_su"/>
</dbReference>
<dbReference type="NCBIfam" id="TIGR01957">
    <property type="entry name" value="nuoB_fam"/>
    <property type="match status" value="1"/>
</dbReference>
<dbReference type="NCBIfam" id="NF005012">
    <property type="entry name" value="PRK06411.1"/>
    <property type="match status" value="1"/>
</dbReference>
<dbReference type="PANTHER" id="PTHR11995">
    <property type="entry name" value="NADH DEHYDROGENASE"/>
    <property type="match status" value="1"/>
</dbReference>
<dbReference type="PANTHER" id="PTHR11995:SF14">
    <property type="entry name" value="NADH DEHYDROGENASE [UBIQUINONE] IRON-SULFUR PROTEIN 7, MITOCHONDRIAL"/>
    <property type="match status" value="1"/>
</dbReference>
<dbReference type="Pfam" id="PF01058">
    <property type="entry name" value="Oxidored_q6"/>
    <property type="match status" value="1"/>
</dbReference>
<dbReference type="SUPFAM" id="SSF56770">
    <property type="entry name" value="HydA/Nqo6-like"/>
    <property type="match status" value="1"/>
</dbReference>
<dbReference type="PROSITE" id="PS01150">
    <property type="entry name" value="COMPLEX1_20K"/>
    <property type="match status" value="1"/>
</dbReference>
<organism>
    <name type="scientific">Microcystis aeruginosa (strain NIES-843 / IAM M-2473)</name>
    <dbReference type="NCBI Taxonomy" id="449447"/>
    <lineage>
        <taxon>Bacteria</taxon>
        <taxon>Bacillati</taxon>
        <taxon>Cyanobacteriota</taxon>
        <taxon>Cyanophyceae</taxon>
        <taxon>Oscillatoriophycideae</taxon>
        <taxon>Chroococcales</taxon>
        <taxon>Microcystaceae</taxon>
        <taxon>Microcystis</taxon>
    </lineage>
</organism>
<name>NDHK_MICAN</name>